<organism>
    <name type="scientific">Enterobacter sp. (strain 638)</name>
    <dbReference type="NCBI Taxonomy" id="399742"/>
    <lineage>
        <taxon>Bacteria</taxon>
        <taxon>Pseudomonadati</taxon>
        <taxon>Pseudomonadota</taxon>
        <taxon>Gammaproteobacteria</taxon>
        <taxon>Enterobacterales</taxon>
        <taxon>Enterobacteriaceae</taxon>
        <taxon>Enterobacter</taxon>
    </lineage>
</organism>
<evidence type="ECO:0000255" key="1">
    <source>
        <dbReference type="HAMAP-Rule" id="MF_00270"/>
    </source>
</evidence>
<evidence type="ECO:0000305" key="2"/>
<accession>A4W5T1</accession>
<sequence>MARYFRRRKFCRFTAEGVQEIDYKDIATLKNYITESGKIVPSRITGTRAKYQRQLARAIKRARYLSLLPYTDRHQ</sequence>
<protein>
    <recommendedName>
        <fullName evidence="1">Small ribosomal subunit protein bS18</fullName>
    </recommendedName>
    <alternativeName>
        <fullName evidence="2">30S ribosomal protein S18</fullName>
    </alternativeName>
</protein>
<proteinExistence type="inferred from homology"/>
<keyword id="KW-0687">Ribonucleoprotein</keyword>
<keyword id="KW-0689">Ribosomal protein</keyword>
<keyword id="KW-0694">RNA-binding</keyword>
<keyword id="KW-0699">rRNA-binding</keyword>
<reference key="1">
    <citation type="journal article" date="2010" name="PLoS Genet.">
        <title>Genome sequence of the plant growth promoting endophytic bacterium Enterobacter sp. 638.</title>
        <authorList>
            <person name="Taghavi S."/>
            <person name="van der Lelie D."/>
            <person name="Hoffman A."/>
            <person name="Zhang Y.B."/>
            <person name="Walla M.D."/>
            <person name="Vangronsveld J."/>
            <person name="Newman L."/>
            <person name="Monchy S."/>
        </authorList>
    </citation>
    <scope>NUCLEOTIDE SEQUENCE [LARGE SCALE GENOMIC DNA]</scope>
    <source>
        <strain>638</strain>
    </source>
</reference>
<comment type="function">
    <text evidence="1">Binds as a heterodimer with protein bS6 to the central domain of the 16S rRNA, where it helps stabilize the platform of the 30S subunit.</text>
</comment>
<comment type="subunit">
    <text evidence="1">Part of the 30S ribosomal subunit. Forms a tight heterodimer with protein bS6.</text>
</comment>
<comment type="similarity">
    <text evidence="1">Belongs to the bacterial ribosomal protein bS18 family.</text>
</comment>
<name>RS18_ENT38</name>
<gene>
    <name evidence="1" type="primary">rpsR</name>
    <name type="ordered locus">Ent638_0373</name>
</gene>
<dbReference type="EMBL" id="CP000653">
    <property type="protein sequence ID" value="ABP59061.1"/>
    <property type="molecule type" value="Genomic_DNA"/>
</dbReference>
<dbReference type="RefSeq" id="WP_000135199.1">
    <property type="nucleotide sequence ID" value="NC_009436.1"/>
</dbReference>
<dbReference type="SMR" id="A4W5T1"/>
<dbReference type="STRING" id="399742.Ent638_0373"/>
<dbReference type="GeneID" id="98186237"/>
<dbReference type="KEGG" id="ent:Ent638_0373"/>
<dbReference type="eggNOG" id="COG0238">
    <property type="taxonomic scope" value="Bacteria"/>
</dbReference>
<dbReference type="HOGENOM" id="CLU_148710_2_3_6"/>
<dbReference type="OrthoDB" id="9812008at2"/>
<dbReference type="Proteomes" id="UP000000230">
    <property type="component" value="Chromosome"/>
</dbReference>
<dbReference type="GO" id="GO:0022627">
    <property type="term" value="C:cytosolic small ribosomal subunit"/>
    <property type="evidence" value="ECO:0007669"/>
    <property type="project" value="TreeGrafter"/>
</dbReference>
<dbReference type="GO" id="GO:0070181">
    <property type="term" value="F:small ribosomal subunit rRNA binding"/>
    <property type="evidence" value="ECO:0007669"/>
    <property type="project" value="TreeGrafter"/>
</dbReference>
<dbReference type="GO" id="GO:0003735">
    <property type="term" value="F:structural constituent of ribosome"/>
    <property type="evidence" value="ECO:0007669"/>
    <property type="project" value="InterPro"/>
</dbReference>
<dbReference type="GO" id="GO:0006412">
    <property type="term" value="P:translation"/>
    <property type="evidence" value="ECO:0007669"/>
    <property type="project" value="UniProtKB-UniRule"/>
</dbReference>
<dbReference type="FunFam" id="4.10.640.10:FF:000001">
    <property type="entry name" value="30S ribosomal protein S18"/>
    <property type="match status" value="1"/>
</dbReference>
<dbReference type="Gene3D" id="4.10.640.10">
    <property type="entry name" value="Ribosomal protein S18"/>
    <property type="match status" value="1"/>
</dbReference>
<dbReference type="HAMAP" id="MF_00270">
    <property type="entry name" value="Ribosomal_bS18"/>
    <property type="match status" value="1"/>
</dbReference>
<dbReference type="InterPro" id="IPR001648">
    <property type="entry name" value="Ribosomal_bS18"/>
</dbReference>
<dbReference type="InterPro" id="IPR018275">
    <property type="entry name" value="Ribosomal_bS18_CS"/>
</dbReference>
<dbReference type="InterPro" id="IPR036870">
    <property type="entry name" value="Ribosomal_bS18_sf"/>
</dbReference>
<dbReference type="NCBIfam" id="TIGR00165">
    <property type="entry name" value="S18"/>
    <property type="match status" value="1"/>
</dbReference>
<dbReference type="PANTHER" id="PTHR13479">
    <property type="entry name" value="30S RIBOSOMAL PROTEIN S18"/>
    <property type="match status" value="1"/>
</dbReference>
<dbReference type="PANTHER" id="PTHR13479:SF40">
    <property type="entry name" value="SMALL RIBOSOMAL SUBUNIT PROTEIN BS18M"/>
    <property type="match status" value="1"/>
</dbReference>
<dbReference type="Pfam" id="PF01084">
    <property type="entry name" value="Ribosomal_S18"/>
    <property type="match status" value="1"/>
</dbReference>
<dbReference type="PRINTS" id="PR00974">
    <property type="entry name" value="RIBOSOMALS18"/>
</dbReference>
<dbReference type="SUPFAM" id="SSF46911">
    <property type="entry name" value="Ribosomal protein S18"/>
    <property type="match status" value="1"/>
</dbReference>
<dbReference type="PROSITE" id="PS00057">
    <property type="entry name" value="RIBOSOMAL_S18"/>
    <property type="match status" value="1"/>
</dbReference>
<feature type="chain" id="PRO_1000059139" description="Small ribosomal subunit protein bS18">
    <location>
        <begin position="1"/>
        <end position="75"/>
    </location>
</feature>